<keyword id="KW-0143">Chaperone</keyword>
<keyword id="KW-0158">Chromosome</keyword>
<keyword id="KW-0238">DNA-binding</keyword>
<keyword id="KW-0539">Nucleus</keyword>
<keyword id="KW-1185">Reference proteome</keyword>
<keyword id="KW-0804">Transcription</keyword>
<keyword id="KW-0805">Transcription regulation</keyword>
<proteinExistence type="inferred from homology"/>
<organism>
    <name type="scientific">Aspergillus niger (strain ATCC MYA-4892 / CBS 513.88 / FGSC A1513)</name>
    <dbReference type="NCBI Taxonomy" id="425011"/>
    <lineage>
        <taxon>Eukaryota</taxon>
        <taxon>Fungi</taxon>
        <taxon>Dikarya</taxon>
        <taxon>Ascomycota</taxon>
        <taxon>Pezizomycotina</taxon>
        <taxon>Eurotiomycetes</taxon>
        <taxon>Eurotiomycetidae</taxon>
        <taxon>Eurotiales</taxon>
        <taxon>Aspergillaceae</taxon>
        <taxon>Aspergillus</taxon>
        <taxon>Aspergillus subgen. Circumdati</taxon>
    </lineage>
</organism>
<gene>
    <name type="primary">rtt106</name>
    <name type="ORF">An18g06020</name>
</gene>
<reference key="1">
    <citation type="journal article" date="2007" name="Nat. Biotechnol.">
        <title>Genome sequencing and analysis of the versatile cell factory Aspergillus niger CBS 513.88.</title>
        <authorList>
            <person name="Pel H.J."/>
            <person name="de Winde J.H."/>
            <person name="Archer D.B."/>
            <person name="Dyer P.S."/>
            <person name="Hofmann G."/>
            <person name="Schaap P.J."/>
            <person name="Turner G."/>
            <person name="de Vries R.P."/>
            <person name="Albang R."/>
            <person name="Albermann K."/>
            <person name="Andersen M.R."/>
            <person name="Bendtsen J.D."/>
            <person name="Benen J.A.E."/>
            <person name="van den Berg M."/>
            <person name="Breestraat S."/>
            <person name="Caddick M.X."/>
            <person name="Contreras R."/>
            <person name="Cornell M."/>
            <person name="Coutinho P.M."/>
            <person name="Danchin E.G.J."/>
            <person name="Debets A.J.M."/>
            <person name="Dekker P."/>
            <person name="van Dijck P.W.M."/>
            <person name="van Dijk A."/>
            <person name="Dijkhuizen L."/>
            <person name="Driessen A.J.M."/>
            <person name="d'Enfert C."/>
            <person name="Geysens S."/>
            <person name="Goosen C."/>
            <person name="Groot G.S.P."/>
            <person name="de Groot P.W.J."/>
            <person name="Guillemette T."/>
            <person name="Henrissat B."/>
            <person name="Herweijer M."/>
            <person name="van den Hombergh J.P.T.W."/>
            <person name="van den Hondel C.A.M.J.J."/>
            <person name="van der Heijden R.T.J.M."/>
            <person name="van der Kaaij R.M."/>
            <person name="Klis F.M."/>
            <person name="Kools H.J."/>
            <person name="Kubicek C.P."/>
            <person name="van Kuyk P.A."/>
            <person name="Lauber J."/>
            <person name="Lu X."/>
            <person name="van der Maarel M.J.E.C."/>
            <person name="Meulenberg R."/>
            <person name="Menke H."/>
            <person name="Mortimer M.A."/>
            <person name="Nielsen J."/>
            <person name="Oliver S.G."/>
            <person name="Olsthoorn M."/>
            <person name="Pal K."/>
            <person name="van Peij N.N.M.E."/>
            <person name="Ram A.F.J."/>
            <person name="Rinas U."/>
            <person name="Roubos J.A."/>
            <person name="Sagt C.M.J."/>
            <person name="Schmoll M."/>
            <person name="Sun J."/>
            <person name="Ussery D."/>
            <person name="Varga J."/>
            <person name="Vervecken W."/>
            <person name="van de Vondervoort P.J.J."/>
            <person name="Wedler H."/>
            <person name="Woesten H.A.B."/>
            <person name="Zeng A.-P."/>
            <person name="van Ooyen A.J.J."/>
            <person name="Visser J."/>
            <person name="Stam H."/>
        </authorList>
    </citation>
    <scope>NUCLEOTIDE SEQUENCE [LARGE SCALE GENOMIC DNA]</scope>
    <source>
        <strain>ATCC MYA-4892 / CBS 513.88 / FGSC A1513</strain>
    </source>
</reference>
<sequence>MAFATINSSVPSSIPAIEDAFAAEPALKKRVYDAIAHTPQHGLLFEDIAKYTSSLLARTATAPVRPVEVVSDGPAMKKRKLQNGNATSAQSSGDLKSDTSLQFYMQDVSFAVPQRKKLTLEVTAGFLRARNQTSKEVEFGVPLDNIQHVLCLPVPEKNQRQFNFCIIPQYADGVNSPPEGVAAPDAIVWTVNDGPPKAAFSGNGQQLGTDNEETADKLVQRILNDSLPRTKVVRPDEREFVSAMPEAHRKGEKAFHVKAFRGSKEGYLFLLSTGILFGFKKPLVFFAFENVDSISYTSVLQRTFNLNVVARPTSSEETQEFEFSMIDQADFSGIDGYIKKHGLQDASLAEARRAKRYNVNGAKGEDEAAANEEGAVEEESELQKAQRELEDQEDEDEEDYDPGSDSDSDGSGSSSEEDDDDDEEDDEGDMEEDDEEGDRNLVAEELGSEAEDVPAEEL</sequence>
<protein>
    <recommendedName>
        <fullName>Histone chaperone rtt106</fullName>
    </recommendedName>
</protein>
<accession>A2RBA1</accession>
<comment type="function">
    <text evidence="1">Histones H3 and H4 chaperone involved in the nucleosome formation and heterochromatin silencing. Required for the deposition of H3K56ac-carrying H3-H4 complex onto newly-replicated DNA. Plays a role in the transcriptional regulation of the cell-cycle dependent histone genes by creating a repressive structure at the core histone gene promoter (By similarity).</text>
</comment>
<comment type="subunit">
    <text evidence="1">Interacts with histones H3 and H4.</text>
</comment>
<comment type="subcellular location">
    <subcellularLocation>
        <location evidence="1">Nucleus</location>
    </subcellularLocation>
    <subcellularLocation>
        <location evidence="1">Chromosome</location>
    </subcellularLocation>
</comment>
<comment type="similarity">
    <text evidence="3">Belongs to the RTT106 family.</text>
</comment>
<evidence type="ECO:0000250" key="1"/>
<evidence type="ECO:0000256" key="2">
    <source>
        <dbReference type="SAM" id="MobiDB-lite"/>
    </source>
</evidence>
<evidence type="ECO:0000305" key="3"/>
<feature type="chain" id="PRO_0000320484" description="Histone chaperone rtt106">
    <location>
        <begin position="1"/>
        <end position="458"/>
    </location>
</feature>
<feature type="region of interest" description="Disordered" evidence="2">
    <location>
        <begin position="71"/>
        <end position="95"/>
    </location>
</feature>
<feature type="region of interest" description="Disordered" evidence="2">
    <location>
        <begin position="359"/>
        <end position="458"/>
    </location>
</feature>
<feature type="compositionally biased region" description="Polar residues" evidence="2">
    <location>
        <begin position="82"/>
        <end position="95"/>
    </location>
</feature>
<feature type="compositionally biased region" description="Acidic residues" evidence="2">
    <location>
        <begin position="367"/>
        <end position="380"/>
    </location>
</feature>
<feature type="compositionally biased region" description="Acidic residues" evidence="2">
    <location>
        <begin position="390"/>
        <end position="408"/>
    </location>
</feature>
<feature type="compositionally biased region" description="Acidic residues" evidence="2">
    <location>
        <begin position="415"/>
        <end position="437"/>
    </location>
</feature>
<feature type="compositionally biased region" description="Acidic residues" evidence="2">
    <location>
        <begin position="446"/>
        <end position="458"/>
    </location>
</feature>
<dbReference type="EMBL" id="AM270411">
    <property type="protein sequence ID" value="CAK43325.1"/>
    <property type="molecule type" value="Genomic_DNA"/>
</dbReference>
<dbReference type="RefSeq" id="XP_001399053.1">
    <property type="nucleotide sequence ID" value="XM_001399016.1"/>
</dbReference>
<dbReference type="SMR" id="A2RBA1"/>
<dbReference type="EnsemblFungi" id="CAK43325">
    <property type="protein sequence ID" value="CAK43325"/>
    <property type="gene ID" value="An18g06020"/>
</dbReference>
<dbReference type="GeneID" id="4990168"/>
<dbReference type="KEGG" id="ang:An18g06020"/>
<dbReference type="VEuPathDB" id="FungiDB:An18g06020"/>
<dbReference type="HOGENOM" id="CLU_033828_0_0_1"/>
<dbReference type="Proteomes" id="UP000006706">
    <property type="component" value="Chromosome 8L"/>
</dbReference>
<dbReference type="GO" id="GO:0005694">
    <property type="term" value="C:chromosome"/>
    <property type="evidence" value="ECO:0007669"/>
    <property type="project" value="UniProtKB-SubCell"/>
</dbReference>
<dbReference type="GO" id="GO:0005634">
    <property type="term" value="C:nucleus"/>
    <property type="evidence" value="ECO:0007669"/>
    <property type="project" value="UniProtKB-SubCell"/>
</dbReference>
<dbReference type="GO" id="GO:0003677">
    <property type="term" value="F:DNA binding"/>
    <property type="evidence" value="ECO:0007669"/>
    <property type="project" value="UniProtKB-KW"/>
</dbReference>
<dbReference type="GO" id="GO:0042393">
    <property type="term" value="F:histone binding"/>
    <property type="evidence" value="ECO:0007669"/>
    <property type="project" value="TreeGrafter"/>
</dbReference>
<dbReference type="GO" id="GO:0031491">
    <property type="term" value="F:nucleosome binding"/>
    <property type="evidence" value="ECO:0007669"/>
    <property type="project" value="TreeGrafter"/>
</dbReference>
<dbReference type="Gene3D" id="2.30.29.120">
    <property type="match status" value="1"/>
</dbReference>
<dbReference type="Gene3D" id="2.30.29.30">
    <property type="entry name" value="Pleckstrin-homology domain (PH domain)/Phosphotyrosine-binding domain (PTB)"/>
    <property type="match status" value="1"/>
</dbReference>
<dbReference type="InterPro" id="IPR011993">
    <property type="entry name" value="PH-like_dom_sf"/>
</dbReference>
<dbReference type="InterPro" id="IPR013719">
    <property type="entry name" value="RTT106/SPT16-like_middle_dom"/>
</dbReference>
<dbReference type="InterPro" id="IPR050454">
    <property type="entry name" value="RTT106/SSRP1_HistChap/FACT"/>
</dbReference>
<dbReference type="PANTHER" id="PTHR45849">
    <property type="entry name" value="FACT COMPLEX SUBUNIT SSRP1"/>
    <property type="match status" value="1"/>
</dbReference>
<dbReference type="PANTHER" id="PTHR45849:SF3">
    <property type="entry name" value="HISTONE CHAPERONE RTT106"/>
    <property type="match status" value="1"/>
</dbReference>
<dbReference type="Pfam" id="PF08512">
    <property type="entry name" value="Rttp106-like_middle"/>
    <property type="match status" value="1"/>
</dbReference>
<dbReference type="SMART" id="SM01287">
    <property type="entry name" value="Rtt106"/>
    <property type="match status" value="1"/>
</dbReference>
<dbReference type="SUPFAM" id="SSF50729">
    <property type="entry name" value="PH domain-like"/>
    <property type="match status" value="1"/>
</dbReference>
<name>RT106_ASPNC</name>